<keyword id="KW-0150">Chloroplast</keyword>
<keyword id="KW-0249">Electron transport</keyword>
<keyword id="KW-0349">Heme</keyword>
<keyword id="KW-0408">Iron</keyword>
<keyword id="KW-0472">Membrane</keyword>
<keyword id="KW-0479">Metal-binding</keyword>
<keyword id="KW-0602">Photosynthesis</keyword>
<keyword id="KW-0934">Plastid</keyword>
<keyword id="KW-0691">RNA editing</keyword>
<keyword id="KW-0793">Thylakoid</keyword>
<keyword id="KW-0812">Transmembrane</keyword>
<keyword id="KW-1133">Transmembrane helix</keyword>
<keyword id="KW-0813">Transport</keyword>
<geneLocation type="chloroplast"/>
<organism>
    <name type="scientific">Adiantum capillus-veneris</name>
    <name type="common">Maidenhair fern</name>
    <dbReference type="NCBI Taxonomy" id="13818"/>
    <lineage>
        <taxon>Eukaryota</taxon>
        <taxon>Viridiplantae</taxon>
        <taxon>Streptophyta</taxon>
        <taxon>Embryophyta</taxon>
        <taxon>Tracheophyta</taxon>
        <taxon>Polypodiopsida</taxon>
        <taxon>Polypodiidae</taxon>
        <taxon>Polypodiales</taxon>
        <taxon>Pteridineae</taxon>
        <taxon>Pteridaceae</taxon>
        <taxon>Vittarioideae</taxon>
        <taxon>Adiantum</taxon>
    </lineage>
</organism>
<gene>
    <name evidence="1" type="primary">petB</name>
</gene>
<dbReference type="EMBL" id="AY178864">
    <property type="protein sequence ID" value="AAP29420.2"/>
    <property type="molecule type" value="Genomic_DNA"/>
</dbReference>
<dbReference type="RefSeq" id="NP_848089.2">
    <property type="nucleotide sequence ID" value="NC_004766.1"/>
</dbReference>
<dbReference type="SMR" id="Q85FJ3"/>
<dbReference type="GeneID" id="807433"/>
<dbReference type="GO" id="GO:0009535">
    <property type="term" value="C:chloroplast thylakoid membrane"/>
    <property type="evidence" value="ECO:0007669"/>
    <property type="project" value="UniProtKB-SubCell"/>
</dbReference>
<dbReference type="GO" id="GO:0045158">
    <property type="term" value="F:electron transporter, transferring electrons within cytochrome b6/f complex of photosystem II activity"/>
    <property type="evidence" value="ECO:0007669"/>
    <property type="project" value="UniProtKB-UniRule"/>
</dbReference>
<dbReference type="GO" id="GO:0046872">
    <property type="term" value="F:metal ion binding"/>
    <property type="evidence" value="ECO:0007669"/>
    <property type="project" value="UniProtKB-KW"/>
</dbReference>
<dbReference type="GO" id="GO:0016491">
    <property type="term" value="F:oxidoreductase activity"/>
    <property type="evidence" value="ECO:0007669"/>
    <property type="project" value="InterPro"/>
</dbReference>
<dbReference type="GO" id="GO:0015979">
    <property type="term" value="P:photosynthesis"/>
    <property type="evidence" value="ECO:0007669"/>
    <property type="project" value="UniProtKB-UniRule"/>
</dbReference>
<dbReference type="GO" id="GO:0022904">
    <property type="term" value="P:respiratory electron transport chain"/>
    <property type="evidence" value="ECO:0007669"/>
    <property type="project" value="InterPro"/>
</dbReference>
<dbReference type="CDD" id="cd00284">
    <property type="entry name" value="Cytochrome_b_N"/>
    <property type="match status" value="1"/>
</dbReference>
<dbReference type="FunFam" id="1.20.810.10:FF:000001">
    <property type="entry name" value="Cytochrome b6"/>
    <property type="match status" value="1"/>
</dbReference>
<dbReference type="Gene3D" id="1.20.810.10">
    <property type="entry name" value="Cytochrome Bc1 Complex, Chain C"/>
    <property type="match status" value="1"/>
</dbReference>
<dbReference type="HAMAP" id="MF_00633">
    <property type="entry name" value="Cytb6_f_cytb6"/>
    <property type="match status" value="1"/>
</dbReference>
<dbReference type="InterPro" id="IPR005797">
    <property type="entry name" value="Cyt_b/b6_N"/>
</dbReference>
<dbReference type="InterPro" id="IPR023530">
    <property type="entry name" value="Cyt_B6_PetB"/>
</dbReference>
<dbReference type="InterPro" id="IPR027387">
    <property type="entry name" value="Cytb/b6-like_sf"/>
</dbReference>
<dbReference type="InterPro" id="IPR048259">
    <property type="entry name" value="Cytochrome_b_N_euk/bac"/>
</dbReference>
<dbReference type="InterPro" id="IPR016174">
    <property type="entry name" value="Di-haem_cyt_TM"/>
</dbReference>
<dbReference type="NCBIfam" id="NF002990">
    <property type="entry name" value="PRK03735.1"/>
    <property type="match status" value="1"/>
</dbReference>
<dbReference type="PANTHER" id="PTHR19271">
    <property type="entry name" value="CYTOCHROME B"/>
    <property type="match status" value="1"/>
</dbReference>
<dbReference type="PANTHER" id="PTHR19271:SF16">
    <property type="entry name" value="CYTOCHROME B"/>
    <property type="match status" value="1"/>
</dbReference>
<dbReference type="Pfam" id="PF00033">
    <property type="entry name" value="Cytochrome_B"/>
    <property type="match status" value="1"/>
</dbReference>
<dbReference type="PIRSF" id="PIRSF000032">
    <property type="entry name" value="Cytochrome_b6"/>
    <property type="match status" value="1"/>
</dbReference>
<dbReference type="SUPFAM" id="SSF81342">
    <property type="entry name" value="Transmembrane di-heme cytochromes"/>
    <property type="match status" value="1"/>
</dbReference>
<dbReference type="PROSITE" id="PS51002">
    <property type="entry name" value="CYTB_NTER"/>
    <property type="match status" value="1"/>
</dbReference>
<protein>
    <recommendedName>
        <fullName evidence="1">Cytochrome b6</fullName>
    </recommendedName>
</protein>
<name>CYB6_ADICA</name>
<reference key="1">
    <citation type="journal article" date="2003" name="DNA Res.">
        <title>Complete nucleotide sequence of the chloroplast genome from a leptosporangiate fern, Adiantum capillus-veneris L.</title>
        <authorList>
            <person name="Wolf P.G."/>
            <person name="Rowe C.A."/>
            <person name="Sinclair R.B."/>
            <person name="Hasebe M."/>
        </authorList>
    </citation>
    <scope>NUCLEOTIDE SEQUENCE [LARGE SCALE GENOMIC DNA]</scope>
</reference>
<reference key="2">
    <citation type="journal article" date="2004" name="Gene">
        <title>High levels of RNA editing in a vascular plant chloroplast genome: analysis of transcripts from the fern Adiantum capillus-veneris.</title>
        <authorList>
            <person name="Wolf P.G."/>
            <person name="Rowe C.A."/>
            <person name="Hasebe M."/>
        </authorList>
    </citation>
    <scope>NUCLEOTIDE SEQUENCE [GENOMIC DNA]</scope>
    <scope>RNA EDITING</scope>
    <source>
        <tissue>Frond</tissue>
    </source>
</reference>
<comment type="function">
    <text evidence="1">Component of the cytochrome b6-f complex, which mediates electron transfer between photosystem II (PSII) and photosystem I (PSI), cyclic electron flow around PSI, and state transitions.</text>
</comment>
<comment type="cofactor">
    <cofactor evidence="1">
        <name>heme b</name>
        <dbReference type="ChEBI" id="CHEBI:60344"/>
    </cofactor>
    <text evidence="1">Binds 2 heme b groups non-covalently with two histidine residues as axial ligands.</text>
</comment>
<comment type="cofactor">
    <cofactor evidence="1">
        <name>heme c</name>
        <dbReference type="ChEBI" id="CHEBI:61717"/>
    </cofactor>
    <text evidence="1">Binds one heme group covalently by a single cysteine link with no axial amino acid ligand. This heme was named heme ci.</text>
</comment>
<comment type="subunit">
    <text evidence="1">The 4 large subunits of the cytochrome b6-f complex are cytochrome b6, subunit IV (17 kDa polypeptide, PetD), cytochrome f and the Rieske protein, while the 4 small subunits are PetG, PetL, PetM and PetN. The complex functions as a dimer.</text>
</comment>
<comment type="subcellular location">
    <subcellularLocation>
        <location evidence="1">Plastid</location>
        <location evidence="1">Chloroplast thylakoid membrane</location>
        <topology evidence="1">Multi-pass membrane protein</topology>
    </subcellularLocation>
</comment>
<comment type="RNA editing">
    <location>
        <position position="72" evidence="2"/>
    </location>
    <location>
        <position position="95" evidence="2"/>
    </location>
    <location>
        <position position="168" evidence="2"/>
    </location>
    <location>
        <position position="200" evidence="2"/>
    </location>
    <location>
        <position position="205" evidence="2"/>
    </location>
</comment>
<comment type="miscellaneous">
    <text evidence="1">Heme 1 (or BH or b566) is high-potential and absorbs at about 566 nm, and heme 2 (or BL or b562) is low-potential and absorbs at about 562 nm.</text>
</comment>
<comment type="similarity">
    <text evidence="1">Belongs to the cytochrome b family. PetB subfamily.</text>
</comment>
<sequence>MSKVYDWFEERLEIQAIADDITSKYVPPHVNIFYCLGGITLTCFLVQIATGFAMTFYYRPTVTEAFSSVQYIMTEVNFGWLIRSVHRWSASMMVLVMILHVFRVYLTGGFKKPRELTWVTGVILAVLTVSFGVTGYSLPWDQIGYWAVKIVTGVPEAIPFIGSSLVELLRGSVSVGQSTLTRFYSLHTFVLPLLTAVFMLMHFLMIRKQGISGPL</sequence>
<accession>Q85FJ3</accession>
<proteinExistence type="evidence at transcript level"/>
<evidence type="ECO:0000255" key="1">
    <source>
        <dbReference type="HAMAP-Rule" id="MF_00633"/>
    </source>
</evidence>
<evidence type="ECO:0000269" key="2">
    <source>
    </source>
</evidence>
<feature type="chain" id="PRO_0000061778" description="Cytochrome b6">
    <location>
        <begin position="1"/>
        <end position="215"/>
    </location>
</feature>
<feature type="transmembrane region" description="Helical" evidence="1">
    <location>
        <begin position="32"/>
        <end position="52"/>
    </location>
</feature>
<feature type="transmembrane region" description="Helical" evidence="1">
    <location>
        <begin position="90"/>
        <end position="110"/>
    </location>
</feature>
<feature type="transmembrane region" description="Helical" evidence="1">
    <location>
        <begin position="116"/>
        <end position="136"/>
    </location>
</feature>
<feature type="transmembrane region" description="Helical" evidence="1">
    <location>
        <begin position="186"/>
        <end position="206"/>
    </location>
</feature>
<feature type="binding site" description="covalent" evidence="1">
    <location>
        <position position="35"/>
    </location>
    <ligand>
        <name>heme c</name>
        <dbReference type="ChEBI" id="CHEBI:61717"/>
    </ligand>
</feature>
<feature type="binding site" description="axial binding residue" evidence="1">
    <location>
        <position position="86"/>
    </location>
    <ligand>
        <name>heme b</name>
        <dbReference type="ChEBI" id="CHEBI:60344"/>
        <label>2</label>
    </ligand>
    <ligandPart>
        <name>Fe</name>
        <dbReference type="ChEBI" id="CHEBI:18248"/>
    </ligandPart>
</feature>
<feature type="binding site" description="axial binding residue" evidence="1">
    <location>
        <position position="100"/>
    </location>
    <ligand>
        <name>heme b</name>
        <dbReference type="ChEBI" id="CHEBI:60344"/>
        <label>1</label>
    </ligand>
    <ligandPart>
        <name>Fe</name>
        <dbReference type="ChEBI" id="CHEBI:18248"/>
    </ligandPart>
</feature>
<feature type="binding site" description="axial binding residue" evidence="1">
    <location>
        <position position="187"/>
    </location>
    <ligand>
        <name>heme b</name>
        <dbReference type="ChEBI" id="CHEBI:60344"/>
        <label>2</label>
    </ligand>
    <ligandPart>
        <name>Fe</name>
        <dbReference type="ChEBI" id="CHEBI:18248"/>
    </ligandPart>
</feature>
<feature type="binding site" description="axial binding residue" evidence="1">
    <location>
        <position position="202"/>
    </location>
    <ligand>
        <name>heme b</name>
        <dbReference type="ChEBI" id="CHEBI:60344"/>
        <label>1</label>
    </ligand>
    <ligandPart>
        <name>Fe</name>
        <dbReference type="ChEBI" id="CHEBI:18248"/>
    </ligandPart>
</feature>